<accession>Q8WI36</accession>
<dbReference type="EC" id="1.10.3.9" evidence="1"/>
<dbReference type="EMBL" id="AP004638">
    <property type="protein sequence ID" value="BAB84195.1"/>
    <property type="molecule type" value="Genomic_DNA"/>
</dbReference>
<dbReference type="RefSeq" id="NP_569608.1">
    <property type="nucleotide sequence ID" value="NC_003386.1"/>
</dbReference>
<dbReference type="SMR" id="Q8WI36"/>
<dbReference type="GeneID" id="2545139"/>
<dbReference type="GO" id="GO:0009535">
    <property type="term" value="C:chloroplast thylakoid membrane"/>
    <property type="evidence" value="ECO:0007669"/>
    <property type="project" value="UniProtKB-SubCell"/>
</dbReference>
<dbReference type="GO" id="GO:0009523">
    <property type="term" value="C:photosystem II"/>
    <property type="evidence" value="ECO:0007669"/>
    <property type="project" value="UniProtKB-KW"/>
</dbReference>
<dbReference type="GO" id="GO:0016168">
    <property type="term" value="F:chlorophyll binding"/>
    <property type="evidence" value="ECO:0007669"/>
    <property type="project" value="UniProtKB-UniRule"/>
</dbReference>
<dbReference type="GO" id="GO:0045156">
    <property type="term" value="F:electron transporter, transferring electrons within the cyclic electron transport pathway of photosynthesis activity"/>
    <property type="evidence" value="ECO:0007669"/>
    <property type="project" value="InterPro"/>
</dbReference>
<dbReference type="GO" id="GO:0005506">
    <property type="term" value="F:iron ion binding"/>
    <property type="evidence" value="ECO:0007669"/>
    <property type="project" value="UniProtKB-UniRule"/>
</dbReference>
<dbReference type="GO" id="GO:0016682">
    <property type="term" value="F:oxidoreductase activity, acting on diphenols and related substances as donors, oxygen as acceptor"/>
    <property type="evidence" value="ECO:0007669"/>
    <property type="project" value="UniProtKB-UniRule"/>
</dbReference>
<dbReference type="GO" id="GO:0010242">
    <property type="term" value="F:oxygen evolving activity"/>
    <property type="evidence" value="ECO:0007669"/>
    <property type="project" value="UniProtKB-EC"/>
</dbReference>
<dbReference type="GO" id="GO:0009772">
    <property type="term" value="P:photosynthetic electron transport in photosystem II"/>
    <property type="evidence" value="ECO:0007669"/>
    <property type="project" value="InterPro"/>
</dbReference>
<dbReference type="GO" id="GO:0009635">
    <property type="term" value="P:response to herbicide"/>
    <property type="evidence" value="ECO:0007669"/>
    <property type="project" value="UniProtKB-KW"/>
</dbReference>
<dbReference type="CDD" id="cd09289">
    <property type="entry name" value="Photosystem-II_D1"/>
    <property type="match status" value="1"/>
</dbReference>
<dbReference type="FunFam" id="1.20.85.10:FF:000002">
    <property type="entry name" value="Photosystem II protein D1"/>
    <property type="match status" value="1"/>
</dbReference>
<dbReference type="Gene3D" id="1.20.85.10">
    <property type="entry name" value="Photosystem II protein D1-like"/>
    <property type="match status" value="1"/>
</dbReference>
<dbReference type="HAMAP" id="MF_01379">
    <property type="entry name" value="PSII_PsbA_D1"/>
    <property type="match status" value="1"/>
</dbReference>
<dbReference type="InterPro" id="IPR055266">
    <property type="entry name" value="D1/D2"/>
</dbReference>
<dbReference type="InterPro" id="IPR036854">
    <property type="entry name" value="Photo_II_D1/D2_sf"/>
</dbReference>
<dbReference type="InterPro" id="IPR000484">
    <property type="entry name" value="Photo_RC_L/M"/>
</dbReference>
<dbReference type="InterPro" id="IPR055265">
    <property type="entry name" value="Photo_RC_L/M_CS"/>
</dbReference>
<dbReference type="InterPro" id="IPR005867">
    <property type="entry name" value="PSII_D1"/>
</dbReference>
<dbReference type="NCBIfam" id="TIGR01151">
    <property type="entry name" value="psbA"/>
    <property type="match status" value="1"/>
</dbReference>
<dbReference type="PANTHER" id="PTHR33149:SF12">
    <property type="entry name" value="PHOTOSYSTEM II D2 PROTEIN"/>
    <property type="match status" value="1"/>
</dbReference>
<dbReference type="PANTHER" id="PTHR33149">
    <property type="entry name" value="PHOTOSYSTEM II PROTEIN D1"/>
    <property type="match status" value="1"/>
</dbReference>
<dbReference type="Pfam" id="PF00124">
    <property type="entry name" value="Photo_RC"/>
    <property type="match status" value="1"/>
</dbReference>
<dbReference type="PRINTS" id="PR00256">
    <property type="entry name" value="REACTNCENTRE"/>
</dbReference>
<dbReference type="SUPFAM" id="SSF81483">
    <property type="entry name" value="Bacterial photosystem II reaction centre, L and M subunits"/>
    <property type="match status" value="1"/>
</dbReference>
<dbReference type="PROSITE" id="PS00244">
    <property type="entry name" value="REACTION_CENTER"/>
    <property type="match status" value="1"/>
</dbReference>
<sequence length="353" mass="38835">MTATLERRESASLWGRFCNWITSTENRLYIGWFGVLMIPTLLTATSVFIIAFIAAPPVDIDGIREPVSGSLLYGNNIISGAIIPTSAAIGLHFYPIWEAASVDEWLYNGGPYELIVLHFLLGVACYMGREWELSFRLGMRPWIAVAYSAPVAAATAVFLIYPIGQGSFSDGMPLGISGTFNFMIVFQAEHNILMHPFHMLGVAGVFGGSLFSAMHGSLVTSSLIRETTENESANAGYKFGQEEETYNIVAAHGYFGRLIFQYASFNNSRSLHFFLAAWPVVGIWFTALGISTMAFNLNGFNFNQSVVDSQGRVINTWADIINRANLGMEVMHERNAHNFPLDLASIEAPLVNG</sequence>
<organism>
    <name type="scientific">Psilotum nudum</name>
    <name type="common">Whisk fern</name>
    <name type="synonym">Lycopodium nudum</name>
    <dbReference type="NCBI Taxonomy" id="3240"/>
    <lineage>
        <taxon>Eukaryota</taxon>
        <taxon>Viridiplantae</taxon>
        <taxon>Streptophyta</taxon>
        <taxon>Embryophyta</taxon>
        <taxon>Tracheophyta</taxon>
        <taxon>Polypodiopsida</taxon>
        <taxon>Ophioglossidae</taxon>
        <taxon>Psilotales</taxon>
        <taxon>Psilotaceae</taxon>
        <taxon>Psilotum</taxon>
    </lineage>
</organism>
<keyword id="KW-0007">Acetylation</keyword>
<keyword id="KW-0106">Calcium</keyword>
<keyword id="KW-0148">Chlorophyll</keyword>
<keyword id="KW-0150">Chloroplast</keyword>
<keyword id="KW-0157">Chromophore</keyword>
<keyword id="KW-0249">Electron transport</keyword>
<keyword id="KW-0359">Herbicide resistance</keyword>
<keyword id="KW-0408">Iron</keyword>
<keyword id="KW-0460">Magnesium</keyword>
<keyword id="KW-0464">Manganese</keyword>
<keyword id="KW-0472">Membrane</keyword>
<keyword id="KW-0479">Metal-binding</keyword>
<keyword id="KW-0560">Oxidoreductase</keyword>
<keyword id="KW-0597">Phosphoprotein</keyword>
<keyword id="KW-0602">Photosynthesis</keyword>
<keyword id="KW-0604">Photosystem II</keyword>
<keyword id="KW-0934">Plastid</keyword>
<keyword id="KW-0793">Thylakoid</keyword>
<keyword id="KW-0812">Transmembrane</keyword>
<keyword id="KW-1133">Transmembrane helix</keyword>
<keyword id="KW-0813">Transport</keyword>
<comment type="function">
    <text evidence="1">Photosystem II (PSII) is a light-driven water:plastoquinone oxidoreductase that uses light energy to abstract electrons from H(2)O, generating O(2) and a proton gradient subsequently used for ATP formation. It consists of a core antenna complex that captures photons, and an electron transfer chain that converts photonic excitation into a charge separation. The D1/D2 (PsbA/PsbD) reaction center heterodimer binds P680, the primary electron donor of PSII as well as several subsequent electron acceptors.</text>
</comment>
<comment type="catalytic activity">
    <reaction evidence="1">
        <text>2 a plastoquinone + 4 hnu + 2 H2O = 2 a plastoquinol + O2</text>
        <dbReference type="Rhea" id="RHEA:36359"/>
        <dbReference type="Rhea" id="RHEA-COMP:9561"/>
        <dbReference type="Rhea" id="RHEA-COMP:9562"/>
        <dbReference type="ChEBI" id="CHEBI:15377"/>
        <dbReference type="ChEBI" id="CHEBI:15379"/>
        <dbReference type="ChEBI" id="CHEBI:17757"/>
        <dbReference type="ChEBI" id="CHEBI:30212"/>
        <dbReference type="ChEBI" id="CHEBI:62192"/>
        <dbReference type="EC" id="1.10.3.9"/>
    </reaction>
</comment>
<comment type="cofactor">
    <text evidence="1">The D1/D2 heterodimer binds P680, chlorophylls that are the primary electron donor of PSII, and subsequent electron acceptors. It shares a non-heme iron and each subunit binds pheophytin, quinone, additional chlorophylls, carotenoids and lipids. D1 provides most of the ligands for the Mn4-Ca-O5 cluster of the oxygen-evolving complex (OEC). There is also a Cl(-1) ion associated with D1 and D2, which is required for oxygen evolution. The PSII complex binds additional chlorophylls, carotenoids and specific lipids.</text>
</comment>
<comment type="subunit">
    <text evidence="1">PSII is composed of 1 copy each of membrane proteins PsbA, PsbB, PsbC, PsbD, PsbE, PsbF, PsbH, PsbI, PsbJ, PsbK, PsbL, PsbM, PsbT, PsbX, PsbY, PsbZ, Psb30/Ycf12, at least 3 peripheral proteins of the oxygen-evolving complex and a large number of cofactors. It forms dimeric complexes.</text>
</comment>
<comment type="subcellular location">
    <subcellularLocation>
        <location evidence="1">Plastid</location>
        <location evidence="1">Chloroplast thylakoid membrane</location>
        <topology evidence="1">Multi-pass membrane protein</topology>
    </subcellularLocation>
</comment>
<comment type="PTM">
    <text evidence="1">Tyr-161 forms a radical intermediate that is referred to as redox-active TyrZ, YZ or Y-Z.</text>
</comment>
<comment type="PTM">
    <text evidence="1">C-terminally processed by CTPA; processing is essential to allow assembly of the oxygen-evolving complex and thus photosynthetic growth.</text>
</comment>
<comment type="miscellaneous">
    <text evidence="1">2 of the reaction center chlorophylls (ChlD1 and ChlD2) are entirely coordinated by water.</text>
</comment>
<comment type="miscellaneous">
    <text evidence="1">Herbicides such as atrazine, BNT, diuron or ioxynil bind in the Q(B) binding site and block subsequent electron transfer.</text>
</comment>
<comment type="similarity">
    <text evidence="1">Belongs to the reaction center PufL/M/PsbA/D family.</text>
</comment>
<reference key="1">
    <citation type="journal article" date="2004" name="Mol. Biol. Evol.">
        <title>Chloroplast phylogeny indicates that bryophytes are monophyletic.</title>
        <authorList>
            <person name="Nishiyama T."/>
            <person name="Wolf P.G."/>
            <person name="Kugita M."/>
            <person name="Sinclair R.B."/>
            <person name="Sugita M."/>
            <person name="Sugiura C."/>
            <person name="Wakasugi T."/>
            <person name="Yamada K."/>
            <person name="Yoshinaga K."/>
            <person name="Yamaguchi K."/>
            <person name="Ueda K."/>
            <person name="Hasebe M."/>
        </authorList>
    </citation>
    <scope>NUCLEOTIDE SEQUENCE [LARGE SCALE GENOMIC DNA]</scope>
    <source>
        <strain>Kingyoku</strain>
    </source>
</reference>
<feature type="initiator methionine" description="Removed" evidence="1">
    <location>
        <position position="1"/>
    </location>
</feature>
<feature type="chain" id="PRO_0000340062" description="Photosystem II protein D1" evidence="1">
    <location>
        <begin position="2"/>
        <end position="344"/>
    </location>
</feature>
<feature type="propeptide" id="PRO_0000340063" evidence="1">
    <location>
        <begin position="345"/>
        <end position="353"/>
    </location>
</feature>
<feature type="transmembrane region" description="Helical" evidence="1">
    <location>
        <begin position="29"/>
        <end position="46"/>
    </location>
</feature>
<feature type="transmembrane region" description="Helical" evidence="1">
    <location>
        <begin position="118"/>
        <end position="133"/>
    </location>
</feature>
<feature type="transmembrane region" description="Helical" evidence="1">
    <location>
        <begin position="142"/>
        <end position="156"/>
    </location>
</feature>
<feature type="transmembrane region" description="Helical" evidence="1">
    <location>
        <begin position="197"/>
        <end position="218"/>
    </location>
</feature>
<feature type="transmembrane region" description="Helical" evidence="1">
    <location>
        <begin position="274"/>
        <end position="288"/>
    </location>
</feature>
<feature type="binding site" description="axial binding residue" evidence="1">
    <location>
        <position position="118"/>
    </location>
    <ligand>
        <name>chlorophyll a</name>
        <dbReference type="ChEBI" id="CHEBI:58416"/>
        <label>ChlzD1</label>
    </ligand>
    <ligandPart>
        <name>Mg</name>
        <dbReference type="ChEBI" id="CHEBI:25107"/>
    </ligandPart>
</feature>
<feature type="binding site" evidence="1">
    <location>
        <position position="126"/>
    </location>
    <ligand>
        <name>pheophytin a</name>
        <dbReference type="ChEBI" id="CHEBI:136840"/>
        <label>D1</label>
    </ligand>
</feature>
<feature type="binding site" evidence="1">
    <location>
        <position position="170"/>
    </location>
    <ligand>
        <name>[CaMn4O5] cluster</name>
        <dbReference type="ChEBI" id="CHEBI:189552"/>
    </ligand>
</feature>
<feature type="binding site" evidence="1">
    <location>
        <position position="189"/>
    </location>
    <ligand>
        <name>[CaMn4O5] cluster</name>
        <dbReference type="ChEBI" id="CHEBI:189552"/>
    </ligand>
</feature>
<feature type="binding site" description="axial binding residue" evidence="1">
    <location>
        <position position="198"/>
    </location>
    <ligand>
        <name>chlorophyll a</name>
        <dbReference type="ChEBI" id="CHEBI:58416"/>
        <label>PD1</label>
    </ligand>
    <ligandPart>
        <name>Mg</name>
        <dbReference type="ChEBI" id="CHEBI:25107"/>
    </ligandPart>
</feature>
<feature type="binding site" evidence="1">
    <location>
        <position position="215"/>
    </location>
    <ligand>
        <name>a quinone</name>
        <dbReference type="ChEBI" id="CHEBI:132124"/>
        <label>B</label>
    </ligand>
</feature>
<feature type="binding site" evidence="1">
    <location>
        <position position="215"/>
    </location>
    <ligand>
        <name>Fe cation</name>
        <dbReference type="ChEBI" id="CHEBI:24875"/>
        <note>ligand shared with heterodimeric partner</note>
    </ligand>
</feature>
<feature type="binding site" evidence="1">
    <location>
        <begin position="264"/>
        <end position="265"/>
    </location>
    <ligand>
        <name>a quinone</name>
        <dbReference type="ChEBI" id="CHEBI:132124"/>
        <label>B</label>
    </ligand>
</feature>
<feature type="binding site" evidence="1">
    <location>
        <position position="272"/>
    </location>
    <ligand>
        <name>Fe cation</name>
        <dbReference type="ChEBI" id="CHEBI:24875"/>
        <note>ligand shared with heterodimeric partner</note>
    </ligand>
</feature>
<feature type="binding site" evidence="1">
    <location>
        <position position="332"/>
    </location>
    <ligand>
        <name>[CaMn4O5] cluster</name>
        <dbReference type="ChEBI" id="CHEBI:189552"/>
    </ligand>
</feature>
<feature type="binding site" evidence="1">
    <location>
        <position position="333"/>
    </location>
    <ligand>
        <name>[CaMn4O5] cluster</name>
        <dbReference type="ChEBI" id="CHEBI:189552"/>
    </ligand>
</feature>
<feature type="binding site" evidence="1">
    <location>
        <position position="342"/>
    </location>
    <ligand>
        <name>[CaMn4O5] cluster</name>
        <dbReference type="ChEBI" id="CHEBI:189552"/>
    </ligand>
</feature>
<feature type="binding site" evidence="1">
    <location>
        <position position="344"/>
    </location>
    <ligand>
        <name>[CaMn4O5] cluster</name>
        <dbReference type="ChEBI" id="CHEBI:189552"/>
    </ligand>
</feature>
<feature type="site" description="Tyrosine radical intermediate" evidence="1">
    <location>
        <position position="161"/>
    </location>
</feature>
<feature type="site" description="Stabilizes free radical intermediate" evidence="1">
    <location>
        <position position="190"/>
    </location>
</feature>
<feature type="site" description="Cleavage; by CTPA" evidence="1">
    <location>
        <begin position="344"/>
        <end position="345"/>
    </location>
</feature>
<feature type="modified residue" description="N-acetylthreonine" evidence="1">
    <location>
        <position position="2"/>
    </location>
</feature>
<feature type="modified residue" description="Phosphothreonine" evidence="1">
    <location>
        <position position="2"/>
    </location>
</feature>
<proteinExistence type="inferred from homology"/>
<evidence type="ECO:0000255" key="1">
    <source>
        <dbReference type="HAMAP-Rule" id="MF_01379"/>
    </source>
</evidence>
<geneLocation type="chloroplast"/>
<protein>
    <recommendedName>
        <fullName evidence="1">Photosystem II protein D1</fullName>
        <shortName evidence="1">PSII D1 protein</shortName>
        <ecNumber evidence="1">1.10.3.9</ecNumber>
    </recommendedName>
    <alternativeName>
        <fullName evidence="1">Photosystem II Q(B) protein</fullName>
    </alternativeName>
</protein>
<name>PSBA_PSINU</name>
<gene>
    <name evidence="1" type="primary">psbA</name>
</gene>